<keyword id="KW-0028">Amino-acid biosynthesis</keyword>
<keyword id="KW-0963">Cytoplasm</keyword>
<keyword id="KW-0554">One-carbon metabolism</keyword>
<keyword id="KW-0663">Pyridoxal phosphate</keyword>
<keyword id="KW-1185">Reference proteome</keyword>
<keyword id="KW-0808">Transferase</keyword>
<gene>
    <name evidence="1" type="primary">glyA</name>
    <name type="ordered locus">STH1917</name>
</gene>
<evidence type="ECO:0000255" key="1">
    <source>
        <dbReference type="HAMAP-Rule" id="MF_00051"/>
    </source>
</evidence>
<proteinExistence type="inferred from homology"/>
<comment type="function">
    <text evidence="1">Catalyzes the reversible interconversion of serine and glycine with tetrahydrofolate (THF) serving as the one-carbon carrier. This reaction serves as the major source of one-carbon groups required for the biosynthesis of purines, thymidylate, methionine, and other important biomolecules. Also exhibits THF-independent aldolase activity toward beta-hydroxyamino acids, producing glycine and aldehydes, via a retro-aldol mechanism.</text>
</comment>
<comment type="catalytic activity">
    <reaction evidence="1">
        <text>(6R)-5,10-methylene-5,6,7,8-tetrahydrofolate + glycine + H2O = (6S)-5,6,7,8-tetrahydrofolate + L-serine</text>
        <dbReference type="Rhea" id="RHEA:15481"/>
        <dbReference type="ChEBI" id="CHEBI:15377"/>
        <dbReference type="ChEBI" id="CHEBI:15636"/>
        <dbReference type="ChEBI" id="CHEBI:33384"/>
        <dbReference type="ChEBI" id="CHEBI:57305"/>
        <dbReference type="ChEBI" id="CHEBI:57453"/>
        <dbReference type="EC" id="2.1.2.1"/>
    </reaction>
</comment>
<comment type="cofactor">
    <cofactor evidence="1">
        <name>pyridoxal 5'-phosphate</name>
        <dbReference type="ChEBI" id="CHEBI:597326"/>
    </cofactor>
</comment>
<comment type="pathway">
    <text evidence="1">One-carbon metabolism; tetrahydrofolate interconversion.</text>
</comment>
<comment type="pathway">
    <text evidence="1">Amino-acid biosynthesis; glycine biosynthesis; glycine from L-serine: step 1/1.</text>
</comment>
<comment type="subunit">
    <text evidence="1">Homodimer.</text>
</comment>
<comment type="subcellular location">
    <subcellularLocation>
        <location evidence="1">Cytoplasm</location>
    </subcellularLocation>
</comment>
<comment type="similarity">
    <text evidence="1">Belongs to the SHMT family.</text>
</comment>
<reference key="1">
    <citation type="journal article" date="2004" name="Nucleic Acids Res.">
        <title>Genome sequence of Symbiobacterium thermophilum, an uncultivable bacterium that depends on microbial commensalism.</title>
        <authorList>
            <person name="Ueda K."/>
            <person name="Yamashita A."/>
            <person name="Ishikawa J."/>
            <person name="Shimada M."/>
            <person name="Watsuji T."/>
            <person name="Morimura K."/>
            <person name="Ikeda H."/>
            <person name="Hattori M."/>
            <person name="Beppu T."/>
        </authorList>
    </citation>
    <scope>NUCLEOTIDE SEQUENCE [LARGE SCALE GENOMIC DNA]</scope>
    <source>
        <strain>DSM 24528 / JCM 14929 / IAM 14863 / T</strain>
    </source>
</reference>
<dbReference type="EC" id="2.1.2.1" evidence="1"/>
<dbReference type="EMBL" id="AP006840">
    <property type="protein sequence ID" value="BAD40902.1"/>
    <property type="molecule type" value="Genomic_DNA"/>
</dbReference>
<dbReference type="RefSeq" id="WP_011196044.1">
    <property type="nucleotide sequence ID" value="NC_006177.1"/>
</dbReference>
<dbReference type="SMR" id="Q67N41"/>
<dbReference type="STRING" id="292459.STH1917"/>
<dbReference type="KEGG" id="sth:STH1917"/>
<dbReference type="eggNOG" id="COG0112">
    <property type="taxonomic scope" value="Bacteria"/>
</dbReference>
<dbReference type="HOGENOM" id="CLU_022477_2_1_9"/>
<dbReference type="OrthoDB" id="9803846at2"/>
<dbReference type="UniPathway" id="UPA00193"/>
<dbReference type="UniPathway" id="UPA00288">
    <property type="reaction ID" value="UER01023"/>
</dbReference>
<dbReference type="Proteomes" id="UP000000417">
    <property type="component" value="Chromosome"/>
</dbReference>
<dbReference type="GO" id="GO:0005829">
    <property type="term" value="C:cytosol"/>
    <property type="evidence" value="ECO:0007669"/>
    <property type="project" value="TreeGrafter"/>
</dbReference>
<dbReference type="GO" id="GO:0004372">
    <property type="term" value="F:glycine hydroxymethyltransferase activity"/>
    <property type="evidence" value="ECO:0007669"/>
    <property type="project" value="UniProtKB-UniRule"/>
</dbReference>
<dbReference type="GO" id="GO:0030170">
    <property type="term" value="F:pyridoxal phosphate binding"/>
    <property type="evidence" value="ECO:0007669"/>
    <property type="project" value="UniProtKB-UniRule"/>
</dbReference>
<dbReference type="GO" id="GO:0019264">
    <property type="term" value="P:glycine biosynthetic process from serine"/>
    <property type="evidence" value="ECO:0007669"/>
    <property type="project" value="UniProtKB-UniRule"/>
</dbReference>
<dbReference type="GO" id="GO:0035999">
    <property type="term" value="P:tetrahydrofolate interconversion"/>
    <property type="evidence" value="ECO:0007669"/>
    <property type="project" value="UniProtKB-UniRule"/>
</dbReference>
<dbReference type="CDD" id="cd00378">
    <property type="entry name" value="SHMT"/>
    <property type="match status" value="1"/>
</dbReference>
<dbReference type="FunFam" id="3.40.640.10:FF:000001">
    <property type="entry name" value="Serine hydroxymethyltransferase"/>
    <property type="match status" value="1"/>
</dbReference>
<dbReference type="FunFam" id="3.90.1150.10:FF:000003">
    <property type="entry name" value="Serine hydroxymethyltransferase"/>
    <property type="match status" value="1"/>
</dbReference>
<dbReference type="Gene3D" id="3.90.1150.10">
    <property type="entry name" value="Aspartate Aminotransferase, domain 1"/>
    <property type="match status" value="1"/>
</dbReference>
<dbReference type="Gene3D" id="3.40.640.10">
    <property type="entry name" value="Type I PLP-dependent aspartate aminotransferase-like (Major domain)"/>
    <property type="match status" value="1"/>
</dbReference>
<dbReference type="HAMAP" id="MF_00051">
    <property type="entry name" value="SHMT"/>
    <property type="match status" value="1"/>
</dbReference>
<dbReference type="InterPro" id="IPR015424">
    <property type="entry name" value="PyrdxlP-dep_Trfase"/>
</dbReference>
<dbReference type="InterPro" id="IPR015421">
    <property type="entry name" value="PyrdxlP-dep_Trfase_major"/>
</dbReference>
<dbReference type="InterPro" id="IPR015422">
    <property type="entry name" value="PyrdxlP-dep_Trfase_small"/>
</dbReference>
<dbReference type="InterPro" id="IPR001085">
    <property type="entry name" value="Ser_HO-MeTrfase"/>
</dbReference>
<dbReference type="InterPro" id="IPR049943">
    <property type="entry name" value="Ser_HO-MeTrfase-like"/>
</dbReference>
<dbReference type="InterPro" id="IPR019798">
    <property type="entry name" value="Ser_HO-MeTrfase_PLP_BS"/>
</dbReference>
<dbReference type="InterPro" id="IPR039429">
    <property type="entry name" value="SHMT-like_dom"/>
</dbReference>
<dbReference type="NCBIfam" id="NF000586">
    <property type="entry name" value="PRK00011.1"/>
    <property type="match status" value="1"/>
</dbReference>
<dbReference type="PANTHER" id="PTHR11680">
    <property type="entry name" value="SERINE HYDROXYMETHYLTRANSFERASE"/>
    <property type="match status" value="1"/>
</dbReference>
<dbReference type="PANTHER" id="PTHR11680:SF35">
    <property type="entry name" value="SERINE HYDROXYMETHYLTRANSFERASE 1"/>
    <property type="match status" value="1"/>
</dbReference>
<dbReference type="Pfam" id="PF00464">
    <property type="entry name" value="SHMT"/>
    <property type="match status" value="1"/>
</dbReference>
<dbReference type="PIRSF" id="PIRSF000412">
    <property type="entry name" value="SHMT"/>
    <property type="match status" value="1"/>
</dbReference>
<dbReference type="SUPFAM" id="SSF53383">
    <property type="entry name" value="PLP-dependent transferases"/>
    <property type="match status" value="1"/>
</dbReference>
<dbReference type="PROSITE" id="PS00096">
    <property type="entry name" value="SHMT"/>
    <property type="match status" value="1"/>
</dbReference>
<accession>Q67N41</accession>
<feature type="chain" id="PRO_0000113680" description="Serine hydroxymethyltransferase">
    <location>
        <begin position="1"/>
        <end position="412"/>
    </location>
</feature>
<feature type="binding site" evidence="1">
    <location>
        <position position="117"/>
    </location>
    <ligand>
        <name>(6S)-5,6,7,8-tetrahydrofolate</name>
        <dbReference type="ChEBI" id="CHEBI:57453"/>
    </ligand>
</feature>
<feature type="binding site" evidence="1">
    <location>
        <begin position="121"/>
        <end position="123"/>
    </location>
    <ligand>
        <name>(6S)-5,6,7,8-tetrahydrofolate</name>
        <dbReference type="ChEBI" id="CHEBI:57453"/>
    </ligand>
</feature>
<feature type="site" description="Plays an important role in substrate specificity" evidence="1">
    <location>
        <position position="225"/>
    </location>
</feature>
<feature type="modified residue" description="N6-(pyridoxal phosphate)lysine" evidence="1">
    <location>
        <position position="226"/>
    </location>
</feature>
<sequence length="412" mass="45508">MDALKRYDPEVFAAIQQEVERQQRNIELIASENFVPKAVLEAAGTVLTNKYAEGYPGRRYYGGCEYVDIVENIARERLKAAFGAEHVNVQPHSGANANTAVYFAFLQPGDTVLGMNLAQGGHLTHGSPVNFSGRTYNFVPYGLDPETERINMDQVAELARQHRPKLIVAGYSAYPRVLDFKRFREIAEEVGAILMVDMAHFAGLAATGYYPNPVEHAHVVTTTTHKTLRGPRGGAILCKKEFAKEIDKAVFPGMQGGPLMHIIAAKAVAFKQLSDPDYRAYCGQVVKNAKALAQALLERGYRLVTGGTDNHLMLVDLRPKGITGRDAEHLLDRVSITVNKNAIPNDPEKPMVTSGIRIGTPAMTTRGMKEAEMVQIADLIDRAITHRNDEAELDRIRAEVHELTARFPLYAD</sequence>
<protein>
    <recommendedName>
        <fullName evidence="1">Serine hydroxymethyltransferase</fullName>
        <shortName evidence="1">SHMT</shortName>
        <shortName evidence="1">Serine methylase</shortName>
        <ecNumber evidence="1">2.1.2.1</ecNumber>
    </recommendedName>
</protein>
<organism>
    <name type="scientific">Symbiobacterium thermophilum (strain DSM 24528 / JCM 14929 / IAM 14863 / T)</name>
    <dbReference type="NCBI Taxonomy" id="292459"/>
    <lineage>
        <taxon>Bacteria</taxon>
        <taxon>Bacillati</taxon>
        <taxon>Bacillota</taxon>
        <taxon>Clostridia</taxon>
        <taxon>Eubacteriales</taxon>
        <taxon>Symbiobacteriaceae</taxon>
        <taxon>Symbiobacterium</taxon>
    </lineage>
</organism>
<name>GLYA_SYMTH</name>